<comment type="function">
    <text evidence="1 2">Catalyzes the reversible epimerization of cellobiose to 4-O-beta-D-glucopyranosyl-D-mannose (Glc-Man). Catalyzes epimerization but also isomerization for beta-1,4- and alpha-1,4-gluco-oligosaccharides. Can use cellobiose, lactose, cellotriose, maltose and maltotriose.</text>
</comment>
<comment type="catalytic activity">
    <reaction evidence="1 2">
        <text>D-cellobiose = beta-D-glucosyl-(1-&gt;4)-D-mannopyranose</text>
        <dbReference type="Rhea" id="RHEA:23384"/>
        <dbReference type="ChEBI" id="CHEBI:17057"/>
        <dbReference type="ChEBI" id="CHEBI:47931"/>
        <dbReference type="EC" id="5.1.3.11"/>
    </reaction>
</comment>
<comment type="biophysicochemical properties">
    <kinetics>
        <KM evidence="2">75.8 mM for cellobiose</KM>
        <KM evidence="2">79.6 mM for lactose</KM>
        <text>kcat is 169 min(-1) for cellobiose. kcat is 89.4 min(-1) for lactose.</text>
    </kinetics>
    <phDependence>
        <text evidence="2">Optimum pH is 7.0.</text>
    </phDependence>
    <temperatureDependence>
        <text evidence="2">Optimum temperature is 70 degrees Celsius.</text>
    </temperatureDependence>
</comment>
<comment type="subunit">
    <text evidence="2">Monomer.</text>
</comment>
<comment type="similarity">
    <text evidence="1">Belongs to the cellobiose 2-epimerase family.</text>
</comment>
<accession>B8DZK4</accession>
<organism>
    <name type="scientific">Dictyoglomus turgidum (strain DSM 6724 / Z-1310)</name>
    <dbReference type="NCBI Taxonomy" id="515635"/>
    <lineage>
        <taxon>Bacteria</taxon>
        <taxon>Pseudomonadati</taxon>
        <taxon>Dictyoglomota</taxon>
        <taxon>Dictyoglomia</taxon>
        <taxon>Dictyoglomales</taxon>
        <taxon>Dictyoglomaceae</taxon>
        <taxon>Dictyoglomus</taxon>
    </lineage>
</organism>
<protein>
    <recommendedName>
        <fullName evidence="1">Cellobiose 2-epimerase</fullName>
        <shortName evidence="1">CE</shortName>
        <ecNumber evidence="1">5.1.3.11</ecNumber>
    </recommendedName>
</protein>
<evidence type="ECO:0000255" key="1">
    <source>
        <dbReference type="HAMAP-Rule" id="MF_00929"/>
    </source>
</evidence>
<evidence type="ECO:0000269" key="2">
    <source>
    </source>
</evidence>
<dbReference type="EC" id="5.1.3.11" evidence="1"/>
<dbReference type="EMBL" id="CP001251">
    <property type="protein sequence ID" value="ACK41937.1"/>
    <property type="molecule type" value="Genomic_DNA"/>
</dbReference>
<dbReference type="RefSeq" id="WP_012583022.1">
    <property type="nucleotide sequence ID" value="NC_011661.1"/>
</dbReference>
<dbReference type="RefSeq" id="YP_002352551.1">
    <property type="nucleotide sequence ID" value="NC_011661.1"/>
</dbReference>
<dbReference type="SMR" id="B8DZK4"/>
<dbReference type="STRING" id="515635.Dtur_0652"/>
<dbReference type="EnsemblBacteria" id="ACK41937">
    <property type="protein sequence ID" value="ACK41937"/>
    <property type="gene ID" value="Dtur_0652"/>
</dbReference>
<dbReference type="KEGG" id="dtu:Dtur_0652"/>
<dbReference type="eggNOG" id="COG2942">
    <property type="taxonomic scope" value="Bacteria"/>
</dbReference>
<dbReference type="HOGENOM" id="CLU_046651_3_0_0"/>
<dbReference type="InParanoid" id="B8DZK4"/>
<dbReference type="OrthoDB" id="5141876at2"/>
<dbReference type="BRENDA" id="5.1.3.11">
    <property type="organism ID" value="13721"/>
</dbReference>
<dbReference type="Proteomes" id="UP000007719">
    <property type="component" value="Chromosome"/>
</dbReference>
<dbReference type="GO" id="GO:0047736">
    <property type="term" value="F:cellobiose epimerase activity"/>
    <property type="evidence" value="ECO:0007669"/>
    <property type="project" value="UniProtKB-UniRule"/>
</dbReference>
<dbReference type="GO" id="GO:0050121">
    <property type="term" value="F:N-acylglucosamine 2-epimerase activity"/>
    <property type="evidence" value="ECO:0000318"/>
    <property type="project" value="GO_Central"/>
</dbReference>
<dbReference type="GO" id="GO:0005975">
    <property type="term" value="P:carbohydrate metabolic process"/>
    <property type="evidence" value="ECO:0007669"/>
    <property type="project" value="InterPro"/>
</dbReference>
<dbReference type="GO" id="GO:0006044">
    <property type="term" value="P:N-acetylglucosamine metabolic process"/>
    <property type="evidence" value="ECO:0000318"/>
    <property type="project" value="GO_Central"/>
</dbReference>
<dbReference type="GO" id="GO:0006051">
    <property type="term" value="P:N-acetylmannosamine metabolic process"/>
    <property type="evidence" value="ECO:0000318"/>
    <property type="project" value="GO_Central"/>
</dbReference>
<dbReference type="FunFam" id="1.50.10.10:FF:000021">
    <property type="entry name" value="N-acylglucosamine 2-epimerase"/>
    <property type="match status" value="1"/>
</dbReference>
<dbReference type="Gene3D" id="1.50.10.10">
    <property type="match status" value="1"/>
</dbReference>
<dbReference type="HAMAP" id="MF_00929">
    <property type="entry name" value="Cellobiose_2_epim"/>
    <property type="match status" value="1"/>
</dbReference>
<dbReference type="InterPro" id="IPR008928">
    <property type="entry name" value="6-hairpin_glycosidase_sf"/>
</dbReference>
<dbReference type="InterPro" id="IPR012341">
    <property type="entry name" value="6hp_glycosidase-like_sf"/>
</dbReference>
<dbReference type="InterPro" id="IPR010819">
    <property type="entry name" value="AGE/CE"/>
</dbReference>
<dbReference type="InterPro" id="IPR028584">
    <property type="entry name" value="Cellobiose_2_epim"/>
</dbReference>
<dbReference type="PANTHER" id="PTHR15108">
    <property type="entry name" value="N-ACYLGLUCOSAMINE-2-EPIMERASE"/>
    <property type="match status" value="1"/>
</dbReference>
<dbReference type="Pfam" id="PF07221">
    <property type="entry name" value="GlcNAc_2-epim"/>
    <property type="match status" value="1"/>
</dbReference>
<dbReference type="SUPFAM" id="SSF48208">
    <property type="entry name" value="Six-hairpin glycosidases"/>
    <property type="match status" value="1"/>
</dbReference>
<keyword id="KW-0413">Isomerase</keyword>
<keyword id="KW-1185">Reference proteome</keyword>
<proteinExistence type="evidence at protein level"/>
<reference key="1">
    <citation type="journal article" date="2016" name="Front. Microbiol.">
        <title>The complete genome sequence of hyperthermophile Dictyoglomus turgidum DSM 6724 reveals a specialized carbohydrate fermentor.</title>
        <authorList>
            <person name="Brumm P.J."/>
            <person name="Gowda K."/>
            <person name="Robb F.T."/>
            <person name="Mead D.A."/>
        </authorList>
    </citation>
    <scope>NUCLEOTIDE SEQUENCE [LARGE SCALE GENOMIC DNA]</scope>
    <source>
        <strain>DSM 6724 / Z-1310</strain>
    </source>
</reference>
<reference key="2">
    <citation type="journal article" date="2012" name="Biotechnol. Lett.">
        <title>Characterization of a recombinant cellobiose 2-epimerase from Dictyoglomus turgidum that epimerizes and isomerizes beta-1,4- and alpha-1,4-gluco-oligosaccharides.</title>
        <authorList>
            <person name="Kim J.E."/>
            <person name="Kim Y.S."/>
            <person name="Kang L.W."/>
            <person name="Oh D.K."/>
        </authorList>
    </citation>
    <scope>FUNCTION</scope>
    <scope>CATALYTIC ACTIVITY</scope>
    <scope>BIOPHYSICOCHEMICAL PROPERTIES</scope>
    <scope>SUBUNIT</scope>
    <source>
        <strain>DSM 6724 / Z-1310</strain>
    </source>
</reference>
<name>CEEP_DICTD</name>
<feature type="chain" id="PRO_0000421445" description="Cellobiose 2-epimerase">
    <location>
        <begin position="1"/>
        <end position="389"/>
    </location>
</feature>
<sequence>MDLKVLKSEIFEHLNNKIIPFWEELKDENNGGYISYVGFDLKPDPYAPKGLVLTSRILWFFSRLYNQLRKEEFINFADHSYKFLIKSFLDKENKGFYWMVDYKGEPIDKRKHLYGQAFVLYGLSEYYKATQKKESLDLALEIYKIIEEVCKNDVGYKEEFDEKWNPKENIIVSEYGIICERSMNTLLHILEAYTNLFTATYDQSIKKKIEDLIILFKEKIYDSKTNHLYVFFDKKMNPIIDAISYGHDIEATWLIDEALRYIDNNKLIKEMSEINLKIAEKVLEEAFESGSLLNERVRGIVDKNRIWWVQAEALVGFLNAYQKSKLDKFLKAVFELWEFIKDFLVDKRAQGEWFWKLDENYIPSPMPEVDLWKCPYHNGRMCLEVIKRI</sequence>
<gene>
    <name type="ordered locus">Dtur_0652</name>
</gene>